<reference key="1">
    <citation type="journal article" date="2005" name="Nucleic Acids Res.">
        <title>The genome sequence of Xanthomonas oryzae pathovar oryzae KACC10331, the bacterial blight pathogen of rice.</title>
        <authorList>
            <person name="Lee B.-M."/>
            <person name="Park Y.-J."/>
            <person name="Park D.-S."/>
            <person name="Kang H.-W."/>
            <person name="Kim J.-G."/>
            <person name="Song E.-S."/>
            <person name="Park I.-C."/>
            <person name="Yoon U.-H."/>
            <person name="Hahn J.-H."/>
            <person name="Koo B.-S."/>
            <person name="Lee G.-B."/>
            <person name="Kim H."/>
            <person name="Park H.-S."/>
            <person name="Yoon K.-O."/>
            <person name="Kim J.-H."/>
            <person name="Jung C.-H."/>
            <person name="Koh N.-H."/>
            <person name="Seo J.-S."/>
            <person name="Go S.-J."/>
        </authorList>
    </citation>
    <scope>NUCLEOTIDE SEQUENCE [LARGE SCALE GENOMIC DNA]</scope>
    <source>
        <strain>KACC10331 / KXO85</strain>
    </source>
</reference>
<comment type="function">
    <text evidence="1">DNA ligase that catalyzes the formation of phosphodiester linkages between 5'-phosphoryl and 3'-hydroxyl groups in double-stranded DNA using NAD as a coenzyme and as the energy source for the reaction. It is essential for DNA replication and repair of damaged DNA.</text>
</comment>
<comment type="catalytic activity">
    <reaction evidence="1">
        <text>NAD(+) + (deoxyribonucleotide)n-3'-hydroxyl + 5'-phospho-(deoxyribonucleotide)m = (deoxyribonucleotide)n+m + AMP + beta-nicotinamide D-nucleotide.</text>
        <dbReference type="EC" id="6.5.1.2"/>
    </reaction>
</comment>
<comment type="cofactor">
    <cofactor evidence="1">
        <name>Mg(2+)</name>
        <dbReference type="ChEBI" id="CHEBI:18420"/>
    </cofactor>
    <cofactor evidence="1">
        <name>Mn(2+)</name>
        <dbReference type="ChEBI" id="CHEBI:29035"/>
    </cofactor>
</comment>
<comment type="similarity">
    <text evidence="1">Belongs to the NAD-dependent DNA ligase family. LigA subfamily.</text>
</comment>
<comment type="sequence caution" evidence="2">
    <conflict type="erroneous initiation">
        <sequence resource="EMBL-CDS" id="AAW75664"/>
    </conflict>
</comment>
<protein>
    <recommendedName>
        <fullName evidence="1">DNA ligase</fullName>
        <ecNumber evidence="1">6.5.1.2</ecNumber>
    </recommendedName>
    <alternativeName>
        <fullName evidence="1">Polydeoxyribonucleotide synthase [NAD(+)]</fullName>
    </alternativeName>
</protein>
<gene>
    <name evidence="1" type="primary">ligA</name>
    <name type="ordered locus">XOO2410</name>
</gene>
<keyword id="KW-0227">DNA damage</keyword>
<keyword id="KW-0234">DNA repair</keyword>
<keyword id="KW-0235">DNA replication</keyword>
<keyword id="KW-0436">Ligase</keyword>
<keyword id="KW-0460">Magnesium</keyword>
<keyword id="KW-0464">Manganese</keyword>
<keyword id="KW-0479">Metal-binding</keyword>
<keyword id="KW-0520">NAD</keyword>
<keyword id="KW-1185">Reference proteome</keyword>
<keyword id="KW-0862">Zinc</keyword>
<proteinExistence type="inferred from homology"/>
<evidence type="ECO:0000255" key="1">
    <source>
        <dbReference type="HAMAP-Rule" id="MF_01588"/>
    </source>
</evidence>
<evidence type="ECO:0000305" key="2"/>
<dbReference type="EC" id="6.5.1.2" evidence="1"/>
<dbReference type="EMBL" id="AE013598">
    <property type="protein sequence ID" value="AAW75664.1"/>
    <property type="status" value="ALT_INIT"/>
    <property type="molecule type" value="Genomic_DNA"/>
</dbReference>
<dbReference type="SMR" id="Q5H057"/>
<dbReference type="STRING" id="291331.XOO2410"/>
<dbReference type="KEGG" id="xoo:XOO2410"/>
<dbReference type="HOGENOM" id="CLU_007764_2_2_6"/>
<dbReference type="Proteomes" id="UP000006735">
    <property type="component" value="Chromosome"/>
</dbReference>
<dbReference type="GO" id="GO:0005829">
    <property type="term" value="C:cytosol"/>
    <property type="evidence" value="ECO:0007669"/>
    <property type="project" value="TreeGrafter"/>
</dbReference>
<dbReference type="GO" id="GO:0003911">
    <property type="term" value="F:DNA ligase (NAD+) activity"/>
    <property type="evidence" value="ECO:0007669"/>
    <property type="project" value="UniProtKB-UniRule"/>
</dbReference>
<dbReference type="GO" id="GO:0046872">
    <property type="term" value="F:metal ion binding"/>
    <property type="evidence" value="ECO:0007669"/>
    <property type="project" value="UniProtKB-KW"/>
</dbReference>
<dbReference type="GO" id="GO:0006281">
    <property type="term" value="P:DNA repair"/>
    <property type="evidence" value="ECO:0007669"/>
    <property type="project" value="UniProtKB-KW"/>
</dbReference>
<dbReference type="GO" id="GO:0006260">
    <property type="term" value="P:DNA replication"/>
    <property type="evidence" value="ECO:0007669"/>
    <property type="project" value="UniProtKB-KW"/>
</dbReference>
<dbReference type="CDD" id="cd17748">
    <property type="entry name" value="BRCT_DNA_ligase_like"/>
    <property type="match status" value="1"/>
</dbReference>
<dbReference type="CDD" id="cd00114">
    <property type="entry name" value="LIGANc"/>
    <property type="match status" value="1"/>
</dbReference>
<dbReference type="FunFam" id="1.10.150.20:FF:000006">
    <property type="entry name" value="DNA ligase"/>
    <property type="match status" value="1"/>
</dbReference>
<dbReference type="FunFam" id="1.10.150.20:FF:000007">
    <property type="entry name" value="DNA ligase"/>
    <property type="match status" value="1"/>
</dbReference>
<dbReference type="FunFam" id="2.40.50.140:FF:000012">
    <property type="entry name" value="DNA ligase"/>
    <property type="match status" value="1"/>
</dbReference>
<dbReference type="FunFam" id="3.30.470.30:FF:000001">
    <property type="entry name" value="DNA ligase"/>
    <property type="match status" value="1"/>
</dbReference>
<dbReference type="FunFam" id="3.40.50.10190:FF:000054">
    <property type="entry name" value="DNA ligase"/>
    <property type="match status" value="1"/>
</dbReference>
<dbReference type="Gene3D" id="6.20.10.30">
    <property type="match status" value="1"/>
</dbReference>
<dbReference type="Gene3D" id="1.10.150.20">
    <property type="entry name" value="5' to 3' exonuclease, C-terminal subdomain"/>
    <property type="match status" value="3"/>
</dbReference>
<dbReference type="Gene3D" id="3.40.50.10190">
    <property type="entry name" value="BRCT domain"/>
    <property type="match status" value="1"/>
</dbReference>
<dbReference type="Gene3D" id="3.30.470.30">
    <property type="entry name" value="DNA ligase/mRNA capping enzyme"/>
    <property type="match status" value="1"/>
</dbReference>
<dbReference type="Gene3D" id="1.10.287.610">
    <property type="entry name" value="Helix hairpin bin"/>
    <property type="match status" value="1"/>
</dbReference>
<dbReference type="Gene3D" id="2.40.50.140">
    <property type="entry name" value="Nucleic acid-binding proteins"/>
    <property type="match status" value="1"/>
</dbReference>
<dbReference type="HAMAP" id="MF_01588">
    <property type="entry name" value="DNA_ligase_A"/>
    <property type="match status" value="1"/>
</dbReference>
<dbReference type="InterPro" id="IPR001357">
    <property type="entry name" value="BRCT_dom"/>
</dbReference>
<dbReference type="InterPro" id="IPR036420">
    <property type="entry name" value="BRCT_dom_sf"/>
</dbReference>
<dbReference type="InterPro" id="IPR041663">
    <property type="entry name" value="DisA/LigA_HHH"/>
</dbReference>
<dbReference type="InterPro" id="IPR001679">
    <property type="entry name" value="DNA_ligase"/>
</dbReference>
<dbReference type="InterPro" id="IPR018239">
    <property type="entry name" value="DNA_ligase_AS"/>
</dbReference>
<dbReference type="InterPro" id="IPR013839">
    <property type="entry name" value="DNAligase_adenylation"/>
</dbReference>
<dbReference type="InterPro" id="IPR013840">
    <property type="entry name" value="DNAligase_N"/>
</dbReference>
<dbReference type="InterPro" id="IPR012340">
    <property type="entry name" value="NA-bd_OB-fold"/>
</dbReference>
<dbReference type="InterPro" id="IPR004150">
    <property type="entry name" value="NAD_DNA_ligase_OB"/>
</dbReference>
<dbReference type="InterPro" id="IPR010994">
    <property type="entry name" value="RuvA_2-like"/>
</dbReference>
<dbReference type="InterPro" id="IPR004149">
    <property type="entry name" value="Znf_DNAligase_C4"/>
</dbReference>
<dbReference type="NCBIfam" id="TIGR00575">
    <property type="entry name" value="dnlj"/>
    <property type="match status" value="1"/>
</dbReference>
<dbReference type="NCBIfam" id="NF005932">
    <property type="entry name" value="PRK07956.1"/>
    <property type="match status" value="1"/>
</dbReference>
<dbReference type="PANTHER" id="PTHR23389">
    <property type="entry name" value="CHROMOSOME TRANSMISSION FIDELITY FACTOR 18"/>
    <property type="match status" value="1"/>
</dbReference>
<dbReference type="PANTHER" id="PTHR23389:SF9">
    <property type="entry name" value="DNA LIGASE"/>
    <property type="match status" value="1"/>
</dbReference>
<dbReference type="Pfam" id="PF00533">
    <property type="entry name" value="BRCT"/>
    <property type="match status" value="1"/>
</dbReference>
<dbReference type="Pfam" id="PF01653">
    <property type="entry name" value="DNA_ligase_aden"/>
    <property type="match status" value="1"/>
</dbReference>
<dbReference type="Pfam" id="PF03120">
    <property type="entry name" value="DNA_ligase_OB"/>
    <property type="match status" value="1"/>
</dbReference>
<dbReference type="Pfam" id="PF03119">
    <property type="entry name" value="DNA_ligase_ZBD"/>
    <property type="match status" value="1"/>
</dbReference>
<dbReference type="Pfam" id="PF12826">
    <property type="entry name" value="HHH_2"/>
    <property type="match status" value="1"/>
</dbReference>
<dbReference type="Pfam" id="PF22745">
    <property type="entry name" value="Nlig-Ia"/>
    <property type="match status" value="1"/>
</dbReference>
<dbReference type="SMART" id="SM00292">
    <property type="entry name" value="BRCT"/>
    <property type="match status" value="1"/>
</dbReference>
<dbReference type="SMART" id="SM00532">
    <property type="entry name" value="LIGANc"/>
    <property type="match status" value="1"/>
</dbReference>
<dbReference type="SUPFAM" id="SSF52113">
    <property type="entry name" value="BRCT domain"/>
    <property type="match status" value="1"/>
</dbReference>
<dbReference type="SUPFAM" id="SSF56091">
    <property type="entry name" value="DNA ligase/mRNA capping enzyme, catalytic domain"/>
    <property type="match status" value="1"/>
</dbReference>
<dbReference type="SUPFAM" id="SSF50249">
    <property type="entry name" value="Nucleic acid-binding proteins"/>
    <property type="match status" value="1"/>
</dbReference>
<dbReference type="SUPFAM" id="SSF47781">
    <property type="entry name" value="RuvA domain 2-like"/>
    <property type="match status" value="2"/>
</dbReference>
<dbReference type="PROSITE" id="PS50172">
    <property type="entry name" value="BRCT"/>
    <property type="match status" value="1"/>
</dbReference>
<dbReference type="PROSITE" id="PS01055">
    <property type="entry name" value="DNA_LIGASE_N1"/>
    <property type="match status" value="1"/>
</dbReference>
<sequence>MEQGVIERARELRRRIENADHRYYDLADPEITDAQYDQLFRELQELEQKYPELVTADSPSMRVGGAVRKSFVKVRHSIPMLSLANAFDEVEVKNFVDRIFRRMGSSNPLEFSVEPKFDGLAISLRYELGKFVQGVTRGDGDVGEDVSENIRTIRSVPLKLKGNNVPAILEVRGEVYMPRDGFSEFNKRAMARGEKLLANPRNGAAGSLRQLDSRISAQRPLSFFAYGVGLIQVEQDLFEEIPQSIASTHSAMLAQLRAWGFPVSSLVEVVQGSDGLLAYYQRIGEARDGLPFDIDGVVYKLDDLAGQREMGFVSRAPRWALAHKFPAQEQSTTVEAIEIQIGRTGAATPVARLKPVHVAGVIVTNATLHNADQIARLDVRVGDTVIVRRAGDVIPEVAAVVADQRPPATQSWQMPTQCPVCGSEIVREEGQAVWRCSGELTCPAQRKEAFRHFVSRRAMDVDGLGEKFIEVLVDSGVVQGVADLYLLTVDQLLQLRMISTAESPHAFLREAREHLASGAYAQLEATLVGIGVDLAGEREVPQTWQADLLRAGLPTFDWNRKKIATKWAENLIEAIETSRDTTLERFLFALGIEHVGESTAKALSAWFGDLDLIRHLPWPLFKRVPDIGGEVARSLGHFFDQPGNQKAIDHLLARKVRIGDTHPPSPKLRGELRLANLLEDLEIPKVTPIRAAQIATAFGSIDALRNGGPEPLVEAGVPQSVAESLATWLLVPANDTLAVKAQKKLSALLAMMPEAGEEKTGPLDGQTVVITGTLAALTRDAAKQRLEALGAKVAGSVSKKTAFLVAGEEAGSKLDKAQSLGVEIWDEARLLAFLGEHGQQR</sequence>
<name>DNLJ_XANOR</name>
<organism>
    <name type="scientific">Xanthomonas oryzae pv. oryzae (strain KACC10331 / KXO85)</name>
    <dbReference type="NCBI Taxonomy" id="291331"/>
    <lineage>
        <taxon>Bacteria</taxon>
        <taxon>Pseudomonadati</taxon>
        <taxon>Pseudomonadota</taxon>
        <taxon>Gammaproteobacteria</taxon>
        <taxon>Lysobacterales</taxon>
        <taxon>Lysobacteraceae</taxon>
        <taxon>Xanthomonas</taxon>
    </lineage>
</organism>
<accession>Q5H057</accession>
<feature type="chain" id="PRO_0000313518" description="DNA ligase">
    <location>
        <begin position="1"/>
        <end position="841"/>
    </location>
</feature>
<feature type="domain" description="BRCT" evidence="1">
    <location>
        <begin position="758"/>
        <end position="841"/>
    </location>
</feature>
<feature type="active site" description="N6-AMP-lysine intermediate" evidence="1">
    <location>
        <position position="116"/>
    </location>
</feature>
<feature type="binding site" evidence="1">
    <location>
        <begin position="33"/>
        <end position="37"/>
    </location>
    <ligand>
        <name>NAD(+)</name>
        <dbReference type="ChEBI" id="CHEBI:57540"/>
    </ligand>
</feature>
<feature type="binding site" evidence="1">
    <location>
        <begin position="82"/>
        <end position="83"/>
    </location>
    <ligand>
        <name>NAD(+)</name>
        <dbReference type="ChEBI" id="CHEBI:57540"/>
    </ligand>
</feature>
<feature type="binding site" evidence="1">
    <location>
        <position position="114"/>
    </location>
    <ligand>
        <name>NAD(+)</name>
        <dbReference type="ChEBI" id="CHEBI:57540"/>
    </ligand>
</feature>
<feature type="binding site" evidence="1">
    <location>
        <position position="137"/>
    </location>
    <ligand>
        <name>NAD(+)</name>
        <dbReference type="ChEBI" id="CHEBI:57540"/>
    </ligand>
</feature>
<feature type="binding site" evidence="1">
    <location>
        <position position="174"/>
    </location>
    <ligand>
        <name>NAD(+)</name>
        <dbReference type="ChEBI" id="CHEBI:57540"/>
    </ligand>
</feature>
<feature type="binding site" evidence="1">
    <location>
        <position position="300"/>
    </location>
    <ligand>
        <name>NAD(+)</name>
        <dbReference type="ChEBI" id="CHEBI:57540"/>
    </ligand>
</feature>
<feature type="binding site" evidence="1">
    <location>
        <position position="324"/>
    </location>
    <ligand>
        <name>NAD(+)</name>
        <dbReference type="ChEBI" id="CHEBI:57540"/>
    </ligand>
</feature>
<feature type="binding site" evidence="1">
    <location>
        <position position="418"/>
    </location>
    <ligand>
        <name>Zn(2+)</name>
        <dbReference type="ChEBI" id="CHEBI:29105"/>
    </ligand>
</feature>
<feature type="binding site" evidence="1">
    <location>
        <position position="421"/>
    </location>
    <ligand>
        <name>Zn(2+)</name>
        <dbReference type="ChEBI" id="CHEBI:29105"/>
    </ligand>
</feature>
<feature type="binding site" evidence="1">
    <location>
        <position position="436"/>
    </location>
    <ligand>
        <name>Zn(2+)</name>
        <dbReference type="ChEBI" id="CHEBI:29105"/>
    </ligand>
</feature>
<feature type="binding site" evidence="1">
    <location>
        <position position="442"/>
    </location>
    <ligand>
        <name>Zn(2+)</name>
        <dbReference type="ChEBI" id="CHEBI:29105"/>
    </ligand>
</feature>